<feature type="chain" id="PRO_0000159830" description="Uncharacterized tRNA/rRNA methyltransferase HI_0380">
    <location>
        <begin position="1"/>
        <end position="241"/>
    </location>
</feature>
<feature type="binding site" evidence="1">
    <location>
        <begin position="78"/>
        <end position="80"/>
    </location>
    <ligand>
        <name>S-adenosyl-L-methionine</name>
        <dbReference type="ChEBI" id="CHEBI:59789"/>
    </ligand>
</feature>
<feature type="binding site" evidence="1">
    <location>
        <position position="111"/>
    </location>
    <ligand>
        <name>S-adenosyl-L-methionine</name>
        <dbReference type="ChEBI" id="CHEBI:59789"/>
    </ligand>
</feature>
<feature type="binding site" evidence="1">
    <location>
        <position position="131"/>
    </location>
    <ligand>
        <name>S-adenosyl-L-methionine</name>
        <dbReference type="ChEBI" id="CHEBI:59789"/>
    </ligand>
</feature>
<feature type="binding site" evidence="1">
    <location>
        <begin position="138"/>
        <end position="140"/>
    </location>
    <ligand>
        <name>S-adenosyl-L-methionine</name>
        <dbReference type="ChEBI" id="CHEBI:59789"/>
    </ligand>
</feature>
<feature type="sequence conflict" description="In Ref. 1; AAC22038." evidence="2" ref="1">
    <original>S</original>
    <variation>P</variation>
    <location>
        <position position="73"/>
    </location>
</feature>
<feature type="strand" evidence="3">
    <location>
        <begin position="5"/>
        <end position="11"/>
    </location>
</feature>
<feature type="helix" evidence="3">
    <location>
        <begin position="15"/>
        <end position="27"/>
    </location>
</feature>
<feature type="strand" evidence="3">
    <location>
        <begin position="32"/>
        <end position="37"/>
    </location>
</feature>
<feature type="helix" evidence="3">
    <location>
        <begin position="43"/>
        <end position="47"/>
    </location>
</feature>
<feature type="turn" evidence="3">
    <location>
        <begin position="48"/>
        <end position="51"/>
    </location>
</feature>
<feature type="helix" evidence="3">
    <location>
        <begin position="53"/>
        <end position="58"/>
    </location>
</feature>
<feature type="strand" evidence="3">
    <location>
        <begin position="60"/>
        <end position="64"/>
    </location>
</feature>
<feature type="helix" evidence="3">
    <location>
        <begin position="65"/>
        <end position="68"/>
    </location>
</feature>
<feature type="turn" evidence="3">
    <location>
        <begin position="69"/>
        <end position="71"/>
    </location>
</feature>
<feature type="strand" evidence="3">
    <location>
        <begin position="73"/>
        <end position="78"/>
    </location>
</feature>
<feature type="helix" evidence="3">
    <location>
        <begin position="83"/>
        <end position="85"/>
    </location>
</feature>
<feature type="turn" evidence="3">
    <location>
        <begin position="86"/>
        <end position="88"/>
    </location>
</feature>
<feature type="helix" evidence="3">
    <location>
        <begin position="92"/>
        <end position="101"/>
    </location>
</feature>
<feature type="strand" evidence="3">
    <location>
        <begin position="106"/>
        <end position="110"/>
    </location>
</feature>
<feature type="turn" evidence="3">
    <location>
        <begin position="113"/>
        <end position="115"/>
    </location>
</feature>
<feature type="helix" evidence="3">
    <location>
        <begin position="119"/>
        <end position="123"/>
    </location>
</feature>
<feature type="strand" evidence="3">
    <location>
        <begin position="126"/>
        <end position="129"/>
    </location>
</feature>
<feature type="helix" evidence="3">
    <location>
        <begin position="142"/>
        <end position="166"/>
    </location>
</feature>
<feature type="helix" evidence="3">
    <location>
        <begin position="177"/>
        <end position="193"/>
    </location>
</feature>
<feature type="helix" evidence="3">
    <location>
        <begin position="201"/>
        <end position="213"/>
    </location>
</feature>
<feature type="helix" evidence="3">
    <location>
        <begin position="217"/>
        <end position="237"/>
    </location>
</feature>
<accession>P44676</accession>
<accession>Q9RP31</accession>
<proteinExistence type="evidence at protein level"/>
<name>Y380_HAEIN</name>
<protein>
    <recommendedName>
        <fullName evidence="2">Uncharacterized tRNA/rRNA methyltransferase HI_0380</fullName>
        <ecNumber>2.1.1.-</ecNumber>
    </recommendedName>
</protein>
<keyword id="KW-0002">3D-structure</keyword>
<keyword id="KW-0489">Methyltransferase</keyword>
<keyword id="KW-1185">Reference proteome</keyword>
<keyword id="KW-0949">S-adenosyl-L-methionine</keyword>
<keyword id="KW-0808">Transferase</keyword>
<evidence type="ECO:0000250" key="1">
    <source>
        <dbReference type="UniProtKB" id="P0AE01"/>
    </source>
</evidence>
<evidence type="ECO:0000305" key="2"/>
<evidence type="ECO:0007829" key="3">
    <source>
        <dbReference type="PDB" id="3ILK"/>
    </source>
</evidence>
<comment type="similarity">
    <text evidence="2">Belongs to the class IV-like SAM-binding methyltransferase superfamily. RNA methyltransferase TrmH family.</text>
</comment>
<organism>
    <name type="scientific">Haemophilus influenzae (strain ATCC 51907 / DSM 11121 / KW20 / Rd)</name>
    <dbReference type="NCBI Taxonomy" id="71421"/>
    <lineage>
        <taxon>Bacteria</taxon>
        <taxon>Pseudomonadati</taxon>
        <taxon>Pseudomonadota</taxon>
        <taxon>Gammaproteobacteria</taxon>
        <taxon>Pasteurellales</taxon>
        <taxon>Pasteurellaceae</taxon>
        <taxon>Haemophilus</taxon>
    </lineage>
</organism>
<sequence>MLENIRIVLIETSHSGNIGSAARAMKTMGLTQLCLVSPKSVDEQSYALSAGAENIVKNARVVDSFDEAVDDCSLVIGTSARLRHLQNTLIEPRECAEKVVAYKGKIAIVFGRERIGLTNEELLKCHYHLNIPANPDYSSLNLAMAVQLVSYELRMAFLVQNNKKNSLSLIEKNYPTTDQLAYFFDYTERIYQSLGFIQNQGVMRKLKRLYYRAKLEKNELNILNGMLSAVEKRIDLTKEDN</sequence>
<dbReference type="EC" id="2.1.1.-"/>
<dbReference type="EMBL" id="L42023">
    <property type="protein sequence ID" value="AAC22038.1"/>
    <property type="molecule type" value="Genomic_DNA"/>
</dbReference>
<dbReference type="EMBL" id="AF174385">
    <property type="protein sequence ID" value="AAD54289.1"/>
    <property type="molecule type" value="Genomic_DNA"/>
</dbReference>
<dbReference type="PIR" id="G64150">
    <property type="entry name" value="G64150"/>
</dbReference>
<dbReference type="RefSeq" id="NP_438541.1">
    <property type="nucleotide sequence ID" value="NC_000907.1"/>
</dbReference>
<dbReference type="PDB" id="3ILK">
    <property type="method" value="X-ray"/>
    <property type="resolution" value="2.01 A"/>
    <property type="chains" value="A/B=1-241"/>
</dbReference>
<dbReference type="PDBsum" id="3ILK"/>
<dbReference type="SMR" id="P44676"/>
<dbReference type="STRING" id="71421.HI_0380"/>
<dbReference type="DNASU" id="949482"/>
<dbReference type="EnsemblBacteria" id="AAC22038">
    <property type="protein sequence ID" value="AAC22038"/>
    <property type="gene ID" value="HI_0380"/>
</dbReference>
<dbReference type="KEGG" id="hin:HI_0380"/>
<dbReference type="PATRIC" id="fig|71421.8.peg.398"/>
<dbReference type="eggNOG" id="COG0565">
    <property type="taxonomic scope" value="Bacteria"/>
</dbReference>
<dbReference type="HOGENOM" id="CLU_056931_3_0_6"/>
<dbReference type="OrthoDB" id="9806346at2"/>
<dbReference type="PhylomeDB" id="P44676"/>
<dbReference type="BioCyc" id="HINF71421:G1GJ1-393-MONOMER"/>
<dbReference type="EvolutionaryTrace" id="P44676"/>
<dbReference type="Proteomes" id="UP000000579">
    <property type="component" value="Chromosome"/>
</dbReference>
<dbReference type="GO" id="GO:0005829">
    <property type="term" value="C:cytosol"/>
    <property type="evidence" value="ECO:0000318"/>
    <property type="project" value="GO_Central"/>
</dbReference>
<dbReference type="GO" id="GO:0003723">
    <property type="term" value="F:RNA binding"/>
    <property type="evidence" value="ECO:0007669"/>
    <property type="project" value="InterPro"/>
</dbReference>
<dbReference type="GO" id="GO:0008173">
    <property type="term" value="F:RNA methyltransferase activity"/>
    <property type="evidence" value="ECO:0007669"/>
    <property type="project" value="InterPro"/>
</dbReference>
<dbReference type="GO" id="GO:0002128">
    <property type="term" value="P:tRNA nucleoside ribose methylation"/>
    <property type="evidence" value="ECO:0000318"/>
    <property type="project" value="GO_Central"/>
</dbReference>
<dbReference type="CDD" id="cd18093">
    <property type="entry name" value="SpoU-like_TrmJ"/>
    <property type="match status" value="1"/>
</dbReference>
<dbReference type="FunFam" id="3.40.1280.10:FF:000006">
    <property type="entry name" value="Uncharacterized tRNA/rRNA methyltransferase HI_0380"/>
    <property type="match status" value="1"/>
</dbReference>
<dbReference type="Gene3D" id="1.10.8.590">
    <property type="match status" value="1"/>
</dbReference>
<dbReference type="Gene3D" id="3.40.1280.10">
    <property type="match status" value="1"/>
</dbReference>
<dbReference type="InterPro" id="IPR029028">
    <property type="entry name" value="Alpha/beta_knot_MTases"/>
</dbReference>
<dbReference type="InterPro" id="IPR004384">
    <property type="entry name" value="RNA_MeTrfase_TrmJ/LasT"/>
</dbReference>
<dbReference type="InterPro" id="IPR001537">
    <property type="entry name" value="SpoU_MeTrfase"/>
</dbReference>
<dbReference type="InterPro" id="IPR029026">
    <property type="entry name" value="tRNA_m1G_MTases_N"/>
</dbReference>
<dbReference type="NCBIfam" id="NF011694">
    <property type="entry name" value="PRK15114.1"/>
    <property type="match status" value="1"/>
</dbReference>
<dbReference type="NCBIfam" id="TIGR00050">
    <property type="entry name" value="rRNA_methyl_1"/>
    <property type="match status" value="1"/>
</dbReference>
<dbReference type="PANTHER" id="PTHR42786:SF2">
    <property type="entry name" value="TRNA (CYTIDINE_URIDINE-2'-O-)-METHYLTRANSFERASE TRMJ"/>
    <property type="match status" value="1"/>
</dbReference>
<dbReference type="PANTHER" id="PTHR42786">
    <property type="entry name" value="TRNA/RRNA METHYLTRANSFERASE"/>
    <property type="match status" value="1"/>
</dbReference>
<dbReference type="Pfam" id="PF00588">
    <property type="entry name" value="SpoU_methylase"/>
    <property type="match status" value="1"/>
</dbReference>
<dbReference type="PIRSF" id="PIRSF004808">
    <property type="entry name" value="LasT"/>
    <property type="match status" value="1"/>
</dbReference>
<dbReference type="SUPFAM" id="SSF75217">
    <property type="entry name" value="alpha/beta knot"/>
    <property type="match status" value="1"/>
</dbReference>
<reference key="1">
    <citation type="journal article" date="1995" name="Science">
        <title>Whole-genome random sequencing and assembly of Haemophilus influenzae Rd.</title>
        <authorList>
            <person name="Fleischmann R.D."/>
            <person name="Adams M.D."/>
            <person name="White O."/>
            <person name="Clayton R.A."/>
            <person name="Kirkness E.F."/>
            <person name="Kerlavage A.R."/>
            <person name="Bult C.J."/>
            <person name="Tomb J.-F."/>
            <person name="Dougherty B.A."/>
            <person name="Merrick J.M."/>
            <person name="McKenney K."/>
            <person name="Sutton G.G."/>
            <person name="FitzHugh W."/>
            <person name="Fields C.A."/>
            <person name="Gocayne J.D."/>
            <person name="Scott J.D."/>
            <person name="Shirley R."/>
            <person name="Liu L.-I."/>
            <person name="Glodek A."/>
            <person name="Kelley J.M."/>
            <person name="Weidman J.F."/>
            <person name="Phillips C.A."/>
            <person name="Spriggs T."/>
            <person name="Hedblom E."/>
            <person name="Cotton M.D."/>
            <person name="Utterback T.R."/>
            <person name="Hanna M.C."/>
            <person name="Nguyen D.T."/>
            <person name="Saudek D.M."/>
            <person name="Brandon R.C."/>
            <person name="Fine L.D."/>
            <person name="Fritchman J.L."/>
            <person name="Fuhrmann J.L."/>
            <person name="Geoghagen N.S.M."/>
            <person name="Gnehm C.L."/>
            <person name="McDonald L.A."/>
            <person name="Small K.V."/>
            <person name="Fraser C.M."/>
            <person name="Smith H.O."/>
            <person name="Venter J.C."/>
        </authorList>
    </citation>
    <scope>NUCLEOTIDE SEQUENCE [LARGE SCALE GENOMIC DNA]</scope>
    <source>
        <strain>ATCC 51907 / DSM 11121 / KW20 / Rd</strain>
    </source>
</reference>
<reference key="2">
    <citation type="submission" date="1999-08" db="EMBL/GenBank/DDBJ databases">
        <authorList>
            <person name="Bonander N."/>
            <person name="Eisenstein E."/>
        </authorList>
    </citation>
    <scope>NUCLEOTIDE SEQUENCE [GENOMIC DNA]</scope>
    <source>
        <strain>ATCC 51907 / DSM 11121 / KW20 / Rd</strain>
    </source>
</reference>
<gene>
    <name type="ordered locus">HI_0380</name>
</gene>